<gene>
    <name type="primary">sed4</name>
    <name type="synonym">sedD</name>
    <name type="ORF">AFUA_4G14000</name>
</gene>
<organism>
    <name type="scientific">Aspergillus fumigatus (strain ATCC MYA-4609 / CBS 101355 / FGSC A1100 / Af293)</name>
    <name type="common">Neosartorya fumigata</name>
    <dbReference type="NCBI Taxonomy" id="330879"/>
    <lineage>
        <taxon>Eukaryota</taxon>
        <taxon>Fungi</taxon>
        <taxon>Dikarya</taxon>
        <taxon>Ascomycota</taxon>
        <taxon>Pezizomycotina</taxon>
        <taxon>Eurotiomycetes</taxon>
        <taxon>Eurotiomycetidae</taxon>
        <taxon>Eurotiales</taxon>
        <taxon>Aspergillaceae</taxon>
        <taxon>Aspergillus</taxon>
        <taxon>Aspergillus subgen. Fumigati</taxon>
    </lineage>
</organism>
<dbReference type="EC" id="3.4.14.10"/>
<dbReference type="EMBL" id="AAHF01000005">
    <property type="protein sequence ID" value="EAL89394.1"/>
    <property type="molecule type" value="Genomic_DNA"/>
</dbReference>
<dbReference type="RefSeq" id="XP_751432.1">
    <property type="nucleotide sequence ID" value="XM_746339.1"/>
</dbReference>
<dbReference type="SMR" id="Q4WQU0"/>
<dbReference type="STRING" id="330879.Q4WQU0"/>
<dbReference type="MEROPS" id="S53.010"/>
<dbReference type="GlyCosmos" id="Q4WQU0">
    <property type="glycosylation" value="4 sites, No reported glycans"/>
</dbReference>
<dbReference type="EnsemblFungi" id="EAL89394">
    <property type="protein sequence ID" value="EAL89394"/>
    <property type="gene ID" value="AFUA_4G14000"/>
</dbReference>
<dbReference type="GeneID" id="3508961"/>
<dbReference type="KEGG" id="afm:AFUA_4G14000"/>
<dbReference type="VEuPathDB" id="FungiDB:Afu4g14000"/>
<dbReference type="eggNOG" id="ENOG502RXDG">
    <property type="taxonomic scope" value="Eukaryota"/>
</dbReference>
<dbReference type="HOGENOM" id="CLU_013783_3_3_1"/>
<dbReference type="InParanoid" id="Q4WQU0"/>
<dbReference type="OMA" id="PEIAWEG"/>
<dbReference type="OrthoDB" id="409122at2759"/>
<dbReference type="Proteomes" id="UP000002530">
    <property type="component" value="Chromosome 4"/>
</dbReference>
<dbReference type="GO" id="GO:0005576">
    <property type="term" value="C:extracellular region"/>
    <property type="evidence" value="ECO:0007669"/>
    <property type="project" value="UniProtKB-SubCell"/>
</dbReference>
<dbReference type="GO" id="GO:0004175">
    <property type="term" value="F:endopeptidase activity"/>
    <property type="evidence" value="ECO:0000318"/>
    <property type="project" value="GO_Central"/>
</dbReference>
<dbReference type="GO" id="GO:0046872">
    <property type="term" value="F:metal ion binding"/>
    <property type="evidence" value="ECO:0007669"/>
    <property type="project" value="UniProtKB-KW"/>
</dbReference>
<dbReference type="GO" id="GO:0004252">
    <property type="term" value="F:serine-type endopeptidase activity"/>
    <property type="evidence" value="ECO:0007669"/>
    <property type="project" value="InterPro"/>
</dbReference>
<dbReference type="GO" id="GO:0008240">
    <property type="term" value="F:tripeptidyl-peptidase activity"/>
    <property type="evidence" value="ECO:0000318"/>
    <property type="project" value="GO_Central"/>
</dbReference>
<dbReference type="GO" id="GO:0006508">
    <property type="term" value="P:proteolysis"/>
    <property type="evidence" value="ECO:0000318"/>
    <property type="project" value="GO_Central"/>
</dbReference>
<dbReference type="CDD" id="cd04056">
    <property type="entry name" value="Peptidases_S53"/>
    <property type="match status" value="1"/>
</dbReference>
<dbReference type="CDD" id="cd11377">
    <property type="entry name" value="Pro-peptidase_S53"/>
    <property type="match status" value="1"/>
</dbReference>
<dbReference type="FunFam" id="3.40.50.200:FF:000015">
    <property type="entry name" value="Tripeptidyl peptidase A"/>
    <property type="match status" value="1"/>
</dbReference>
<dbReference type="Gene3D" id="3.40.50.200">
    <property type="entry name" value="Peptidase S8/S53 domain"/>
    <property type="match status" value="1"/>
</dbReference>
<dbReference type="InterPro" id="IPR000209">
    <property type="entry name" value="Peptidase_S8/S53_dom"/>
</dbReference>
<dbReference type="InterPro" id="IPR036852">
    <property type="entry name" value="Peptidase_S8/S53_dom_sf"/>
</dbReference>
<dbReference type="InterPro" id="IPR023828">
    <property type="entry name" value="Peptidase_S8_Ser-AS"/>
</dbReference>
<dbReference type="InterPro" id="IPR015366">
    <property type="entry name" value="S53_propep"/>
</dbReference>
<dbReference type="InterPro" id="IPR030400">
    <property type="entry name" value="Sedolisin_dom"/>
</dbReference>
<dbReference type="InterPro" id="IPR050819">
    <property type="entry name" value="Tripeptidyl-peptidase_I"/>
</dbReference>
<dbReference type="PANTHER" id="PTHR14218">
    <property type="entry name" value="PROTEASE S8 TRIPEPTIDYL PEPTIDASE I CLN2"/>
    <property type="match status" value="1"/>
</dbReference>
<dbReference type="PANTHER" id="PTHR14218:SF34">
    <property type="entry name" value="TRIPEPTIDYL-PEPTIDASE SED4"/>
    <property type="match status" value="1"/>
</dbReference>
<dbReference type="Pfam" id="PF00082">
    <property type="entry name" value="Peptidase_S8"/>
    <property type="match status" value="1"/>
</dbReference>
<dbReference type="Pfam" id="PF09286">
    <property type="entry name" value="Pro-kuma_activ"/>
    <property type="match status" value="1"/>
</dbReference>
<dbReference type="SMART" id="SM00944">
    <property type="entry name" value="Pro-kuma_activ"/>
    <property type="match status" value="1"/>
</dbReference>
<dbReference type="SUPFAM" id="SSF54897">
    <property type="entry name" value="Protease propeptides/inhibitors"/>
    <property type="match status" value="1"/>
</dbReference>
<dbReference type="SUPFAM" id="SSF52743">
    <property type="entry name" value="Subtilisin-like"/>
    <property type="match status" value="1"/>
</dbReference>
<dbReference type="PROSITE" id="PS51695">
    <property type="entry name" value="SEDOLISIN"/>
    <property type="match status" value="1"/>
</dbReference>
<feature type="signal peptide" evidence="2">
    <location>
        <begin position="1"/>
        <end position="20"/>
    </location>
</feature>
<feature type="propeptide" id="PRO_0000390750" description="Removed in mature form" evidence="3">
    <location>
        <begin position="21"/>
        <end position="187"/>
    </location>
</feature>
<feature type="chain" id="PRO_0000390751" description="Tripeptidyl-peptidase sed4">
    <location>
        <begin position="188"/>
        <end position="594"/>
    </location>
</feature>
<feature type="domain" description="Peptidase S53">
    <location>
        <begin position="197"/>
        <end position="594"/>
    </location>
</feature>
<feature type="active site" description="Charge relay system" evidence="1">
    <location>
        <position position="272"/>
    </location>
</feature>
<feature type="active site" description="Charge relay system" evidence="1">
    <location>
        <position position="276"/>
    </location>
</feature>
<feature type="active site" description="Charge relay system" evidence="1">
    <location>
        <position position="494"/>
    </location>
</feature>
<feature type="binding site" evidence="1">
    <location>
        <position position="536"/>
    </location>
    <ligand>
        <name>Ca(2+)</name>
        <dbReference type="ChEBI" id="CHEBI:29108"/>
    </ligand>
</feature>
<feature type="binding site" evidence="1">
    <location>
        <position position="537"/>
    </location>
    <ligand>
        <name>Ca(2+)</name>
        <dbReference type="ChEBI" id="CHEBI:29108"/>
    </ligand>
</feature>
<feature type="binding site" evidence="1">
    <location>
        <position position="572"/>
    </location>
    <ligand>
        <name>Ca(2+)</name>
        <dbReference type="ChEBI" id="CHEBI:29108"/>
    </ligand>
</feature>
<feature type="binding site" evidence="1">
    <location>
        <position position="574"/>
    </location>
    <ligand>
        <name>Ca(2+)</name>
        <dbReference type="ChEBI" id="CHEBI:29108"/>
    </ligand>
</feature>
<feature type="glycosylation site" description="N-linked (GlcNAc...) asparagine" evidence="2">
    <location>
        <position position="191"/>
    </location>
</feature>
<feature type="glycosylation site" description="N-linked (GlcNAc...) asparagine" evidence="2">
    <location>
        <position position="229"/>
    </location>
</feature>
<feature type="glycosylation site" description="N-linked (GlcNAc...) asparagine" evidence="2">
    <location>
        <position position="250"/>
    </location>
</feature>
<feature type="glycosylation site" description="N-linked (GlcNAc...) asparagine" evidence="2">
    <location>
        <position position="568"/>
    </location>
</feature>
<comment type="function">
    <text evidence="3">Secreted tripeptidyl-peptidase which degrades proteins at acidic pHs and is involved in virulence.</text>
</comment>
<comment type="catalytic activity">
    <reaction>
        <text>Release of an N-terminal tripeptide from a polypeptide.</text>
        <dbReference type="EC" id="3.4.14.10"/>
    </reaction>
</comment>
<comment type="cofactor">
    <cofactor evidence="1">
        <name>Ca(2+)</name>
        <dbReference type="ChEBI" id="CHEBI:29108"/>
    </cofactor>
    <text evidence="1">Binds 1 Ca(2+) ion per subunit.</text>
</comment>
<comment type="biophysicochemical properties">
    <phDependence>
        <text evidence="3">Optimum pH is about 5.</text>
    </phDependence>
</comment>
<comment type="subcellular location">
    <subcellularLocation>
        <location evidence="3">Secreted</location>
        <location evidence="3">Extracellular space</location>
    </subcellularLocation>
</comment>
<comment type="PTM">
    <text evidence="3">N-glycosylated.</text>
</comment>
<sequence length="594" mass="63945">MLSSTLYAGWLLSLAAPALCVVQEKLSAVPSGWTLIEDASESDTITLSIALARQNLDQLESKLTTLATPGNPEYGKWLDQSDIESLFPTASDDAVLQWLKAAGITQVSRQGSLVNFATTVGTANKLFDTKFSYYRNGASQKLRTTQYSIPDHLTESIDLIAPTVFFGKEQNSALSSHAVKLPALPRRAATNSSCANLITPDCLVEMYNLGDYKPDASSGSRVGFGSFLNESANYADLAAYEQLFNIPPQNFSVELINRGVNDQNWATASLGEANLDVELIVAVSHPLPVVEFITGGSPPFVPNADEPTAADNQNEPYLQYYEYLLSKPNSHLPQVISNSYGDDEQTVPEYYARRVCNLIGLMGLRGITVLESSGDTGIGSACMSNDGTNKPQFTPTFPGTCPFITAVGGTQSYAPEVAWDGSSGGFSNYFSRPWYQSFAVDNYLNNHITKDTKKYYSQYTNFKGRGFPDVSAHSLTPYYEVVLTGKHYKSGGTSAASPVFAGIVGLLNDARLRAGKSTLGFLNPLLYSILAEGFTDITAGSSIGCNGINPQTGKPVPGGGIIPYAHWNATAGWDPVTGLGVPDFMKLKELVLSL</sequence>
<proteinExistence type="evidence at protein level"/>
<name>SED4_ASPFU</name>
<reference key="1">
    <citation type="journal article" date="2005" name="Nature">
        <title>Genomic sequence of the pathogenic and allergenic filamentous fungus Aspergillus fumigatus.</title>
        <authorList>
            <person name="Nierman W.C."/>
            <person name="Pain A."/>
            <person name="Anderson M.J."/>
            <person name="Wortman J.R."/>
            <person name="Kim H.S."/>
            <person name="Arroyo J."/>
            <person name="Berriman M."/>
            <person name="Abe K."/>
            <person name="Archer D.B."/>
            <person name="Bermejo C."/>
            <person name="Bennett J.W."/>
            <person name="Bowyer P."/>
            <person name="Chen D."/>
            <person name="Collins M."/>
            <person name="Coulsen R."/>
            <person name="Davies R."/>
            <person name="Dyer P.S."/>
            <person name="Farman M.L."/>
            <person name="Fedorova N."/>
            <person name="Fedorova N.D."/>
            <person name="Feldblyum T.V."/>
            <person name="Fischer R."/>
            <person name="Fosker N."/>
            <person name="Fraser A."/>
            <person name="Garcia J.L."/>
            <person name="Garcia M.J."/>
            <person name="Goble A."/>
            <person name="Goldman G.H."/>
            <person name="Gomi K."/>
            <person name="Griffith-Jones S."/>
            <person name="Gwilliam R."/>
            <person name="Haas B.J."/>
            <person name="Haas H."/>
            <person name="Harris D.E."/>
            <person name="Horiuchi H."/>
            <person name="Huang J."/>
            <person name="Humphray S."/>
            <person name="Jimenez J."/>
            <person name="Keller N."/>
            <person name="Khouri H."/>
            <person name="Kitamoto K."/>
            <person name="Kobayashi T."/>
            <person name="Konzack S."/>
            <person name="Kulkarni R."/>
            <person name="Kumagai T."/>
            <person name="Lafton A."/>
            <person name="Latge J.-P."/>
            <person name="Li W."/>
            <person name="Lord A."/>
            <person name="Lu C."/>
            <person name="Majoros W.H."/>
            <person name="May G.S."/>
            <person name="Miller B.L."/>
            <person name="Mohamoud Y."/>
            <person name="Molina M."/>
            <person name="Monod M."/>
            <person name="Mouyna I."/>
            <person name="Mulligan S."/>
            <person name="Murphy L.D."/>
            <person name="O'Neil S."/>
            <person name="Paulsen I."/>
            <person name="Penalva M.A."/>
            <person name="Pertea M."/>
            <person name="Price C."/>
            <person name="Pritchard B.L."/>
            <person name="Quail M.A."/>
            <person name="Rabbinowitsch E."/>
            <person name="Rawlins N."/>
            <person name="Rajandream M.A."/>
            <person name="Reichard U."/>
            <person name="Renauld H."/>
            <person name="Robson G.D."/>
            <person name="Rodriguez de Cordoba S."/>
            <person name="Rodriguez-Pena J.M."/>
            <person name="Ronning C.M."/>
            <person name="Rutter S."/>
            <person name="Salzberg S.L."/>
            <person name="Sanchez M."/>
            <person name="Sanchez-Ferrero J.C."/>
            <person name="Saunders D."/>
            <person name="Seeger K."/>
            <person name="Squares R."/>
            <person name="Squares S."/>
            <person name="Takeuchi M."/>
            <person name="Tekaia F."/>
            <person name="Turner G."/>
            <person name="Vazquez de Aldana C.R."/>
            <person name="Weidman J."/>
            <person name="White O."/>
            <person name="Woodward J.R."/>
            <person name="Yu J.-H."/>
            <person name="Fraser C.M."/>
            <person name="Galagan J.E."/>
            <person name="Asai K."/>
            <person name="Machida M."/>
            <person name="Hall N."/>
            <person name="Barrell B.G."/>
            <person name="Denning D.W."/>
        </authorList>
    </citation>
    <scope>NUCLEOTIDE SEQUENCE [LARGE SCALE GENOMIC DNA]</scope>
    <source>
        <strain>ATCC MYA-4609 / CBS 101355 / FGSC A1100 / Af293</strain>
    </source>
</reference>
<reference key="2">
    <citation type="journal article" date="2006" name="Appl. Environ. Microbiol.">
        <title>Sedolisins, a new class of secreted proteases from Aspergillus fumigatus with endoprotease or tripeptidyl-peptidase activity at acidic pHs.</title>
        <authorList>
            <person name="Reichard U."/>
            <person name="Lechenne B."/>
            <person name="Asif A.R."/>
            <person name="Streit F."/>
            <person name="Grouzmann E."/>
            <person name="Jousson O."/>
            <person name="Monod M."/>
        </authorList>
    </citation>
    <scope>PROTEIN SEQUENCE OF N-TERMINUS</scope>
    <scope>GLYCOSYLATION</scope>
    <scope>FUNCTION</scope>
    <scope>SUBCELLULAR LOCATION</scope>
    <scope>BIOPHYSICOCHEMICAL PROPERTIES</scope>
    <source>
        <strain>D141</strain>
    </source>
</reference>
<accession>Q4WQU0</accession>
<evidence type="ECO:0000250" key="1"/>
<evidence type="ECO:0000255" key="2"/>
<evidence type="ECO:0000269" key="3">
    <source>
    </source>
</evidence>
<keyword id="KW-0106">Calcium</keyword>
<keyword id="KW-0903">Direct protein sequencing</keyword>
<keyword id="KW-0325">Glycoprotein</keyword>
<keyword id="KW-0378">Hydrolase</keyword>
<keyword id="KW-0479">Metal-binding</keyword>
<keyword id="KW-0645">Protease</keyword>
<keyword id="KW-1185">Reference proteome</keyword>
<keyword id="KW-0964">Secreted</keyword>
<keyword id="KW-0720">Serine protease</keyword>
<keyword id="KW-0732">Signal</keyword>
<keyword id="KW-0843">Virulence</keyword>
<keyword id="KW-0865">Zymogen</keyword>
<protein>
    <recommendedName>
        <fullName>Tripeptidyl-peptidase sed4</fullName>
        <ecNumber>3.4.14.10</ecNumber>
    </recommendedName>
    <alternativeName>
        <fullName>Sedolisin-D</fullName>
    </alternativeName>
</protein>